<dbReference type="EMBL" id="X55965">
    <property type="protein sequence ID" value="CAA39436.1"/>
    <property type="molecule type" value="Genomic_DNA"/>
</dbReference>
<dbReference type="PIR" id="S15627">
    <property type="entry name" value="S15627"/>
</dbReference>
<dbReference type="SMR" id="P22162"/>
<dbReference type="Proteomes" id="UP000007667">
    <property type="component" value="Genome"/>
</dbReference>
<dbReference type="GO" id="GO:0042025">
    <property type="term" value="C:host cell nucleus"/>
    <property type="evidence" value="ECO:0007669"/>
    <property type="project" value="UniProtKB-SubCell"/>
</dbReference>
<dbReference type="GO" id="GO:0039620">
    <property type="term" value="C:T=7 icosahedral viral capsid"/>
    <property type="evidence" value="ECO:0007669"/>
    <property type="project" value="UniProtKB-UniRule"/>
</dbReference>
<dbReference type="GO" id="GO:0005198">
    <property type="term" value="F:structural molecule activity"/>
    <property type="evidence" value="ECO:0007669"/>
    <property type="project" value="UniProtKB-UniRule"/>
</dbReference>
<dbReference type="GO" id="GO:0075509">
    <property type="term" value="P:endocytosis involved in viral entry into host cell"/>
    <property type="evidence" value="ECO:0007669"/>
    <property type="project" value="UniProtKB-KW"/>
</dbReference>
<dbReference type="GO" id="GO:0019062">
    <property type="term" value="P:virion attachment to host cell"/>
    <property type="evidence" value="ECO:0007669"/>
    <property type="project" value="UniProtKB-UniRule"/>
</dbReference>
<dbReference type="Gene3D" id="2.60.175.20">
    <property type="entry name" value="Major capsid L1 (late) superfamily, Papillomavirus"/>
    <property type="match status" value="2"/>
</dbReference>
<dbReference type="HAMAP" id="MF_04002">
    <property type="entry name" value="PPV_L1"/>
    <property type="match status" value="1"/>
</dbReference>
<dbReference type="InterPro" id="IPR002210">
    <property type="entry name" value="Capsid_L1_Papillomavir"/>
</dbReference>
<dbReference type="InterPro" id="IPR036973">
    <property type="entry name" value="Capsid_L1_sf_Papillomavir"/>
</dbReference>
<dbReference type="InterPro" id="IPR011222">
    <property type="entry name" value="dsDNA_vir_gr_I_capsid"/>
</dbReference>
<dbReference type="Pfam" id="PF00500">
    <property type="entry name" value="Late_protein_L1"/>
    <property type="match status" value="1"/>
</dbReference>
<dbReference type="PRINTS" id="PR00865">
    <property type="entry name" value="HPVCAPSIDL1"/>
</dbReference>
<dbReference type="SUPFAM" id="SSF88648">
    <property type="entry name" value="Group I dsDNA viruses"/>
    <property type="match status" value="1"/>
</dbReference>
<proteinExistence type="inferred from homology"/>
<feature type="chain" id="PRO_0000133540" description="Major capsid protein L1">
    <location>
        <begin position="1"/>
        <end position="510"/>
    </location>
</feature>
<feature type="region of interest" description="Disordered" evidence="2">
    <location>
        <begin position="490"/>
        <end position="510"/>
    </location>
</feature>
<feature type="disulfide bond" description="Interchain (with C-439)" evidence="1">
    <location>
        <position position="189"/>
    </location>
</feature>
<feature type="disulfide bond" description="Interchain (with C-189)" evidence="1">
    <location>
        <position position="439"/>
    </location>
</feature>
<evidence type="ECO:0000255" key="1">
    <source>
        <dbReference type="HAMAP-Rule" id="MF_04002"/>
    </source>
</evidence>
<evidence type="ECO:0000256" key="2">
    <source>
        <dbReference type="SAM" id="MobiDB-lite"/>
    </source>
</evidence>
<organism>
    <name type="scientific">Human papillomavirus 57</name>
    <dbReference type="NCBI Taxonomy" id="333753"/>
    <lineage>
        <taxon>Viruses</taxon>
        <taxon>Monodnaviria</taxon>
        <taxon>Shotokuvirae</taxon>
        <taxon>Cossaviricota</taxon>
        <taxon>Papovaviricetes</taxon>
        <taxon>Zurhausenvirales</taxon>
        <taxon>Papillomaviridae</taxon>
        <taxon>Firstpapillomavirinae</taxon>
        <taxon>Alphapapillomavirus</taxon>
        <taxon>Alphapapillomavirus 4</taxon>
    </lineage>
</organism>
<keyword id="KW-0167">Capsid protein</keyword>
<keyword id="KW-1015">Disulfide bond</keyword>
<keyword id="KW-1048">Host nucleus</keyword>
<keyword id="KW-0945">Host-virus interaction</keyword>
<keyword id="KW-0426">Late protein</keyword>
<keyword id="KW-1145">T=7 icosahedral capsid protein</keyword>
<keyword id="KW-1161">Viral attachment to host cell</keyword>
<keyword id="KW-1162">Viral penetration into host cytoplasm</keyword>
<keyword id="KW-0946">Virion</keyword>
<keyword id="KW-1164">Virus endocytosis by host</keyword>
<keyword id="KW-1160">Virus entry into host cell</keyword>
<organismHost>
    <name type="scientific">Homo sapiens</name>
    <name type="common">Human</name>
    <dbReference type="NCBI Taxonomy" id="9606"/>
</organismHost>
<name>VL1_HPV57</name>
<sequence length="510" mass="57240">MFCGLNDVNVCTISLQMAMWRPNESKVYLPPTPVSKVLSTDVYVTRTNVYYHGGSSRLLTVGHPYYSIKKSGNNKVSVPKVSGYQYRVFHVKLPDPNKFGLPDANLYDPDTQRLLWACVGVEVGRGQPLGVGISGHPYYNKQDDTENSHNPDAADDGREYISMDYKQTQLFILGCKPPIGEHWSKGTTCSGSSAVGDCPPLQFTNTTIEDGDMVETGFGALDFAALQSNKSDVPLDICTNICKYPDYLKMAADPYGDSMFFSLRREQMFTRHFFNRGGSMGDALPDELYVKSSTVQTPGSYVYTSTPSGSMVSSEQQLFNKPYWLRRAQGHNNGMCWGNRIFLTVVDTTRSTNVSLCATVTTETNYKASNYKEYLRHMEEYDLQFIFQLCKITLTPEIMAYIHNMDARLLEDWNFGVPPPPSASLQDTYRYLQSQAITCQKPTPPKTPTDPYATMTFWDVDLSESFSMDLDQFPLGRKFLLQRGATPTVSRKRAAATAAAPTAKRKKVRR</sequence>
<gene>
    <name evidence="1" type="primary">L1</name>
</gene>
<reference key="1">
    <citation type="journal article" date="1990" name="Virus Res.">
        <title>A comparative sequence analysis of two human papillomavirus (HPV) types 2a and 57.</title>
        <authorList>
            <person name="Hirsch-Behnam A."/>
            <person name="Delius H."/>
            <person name="de Villiers E.M."/>
        </authorList>
    </citation>
    <scope>NUCLEOTIDE SEQUENCE [GENOMIC DNA]</scope>
</reference>
<protein>
    <recommendedName>
        <fullName evidence="1">Major capsid protein L1</fullName>
    </recommendedName>
</protein>
<comment type="function">
    <text evidence="1">Forms an icosahedral capsid with a T=7 symmetry and a 50 nm diameter. The capsid is composed of 72 pentamers linked to each other by disulfide bonds and associated with L2 proteins. Binds to heparan sulfate proteoglycans on cell surface of basal layer keratinocytes to provide initial virion attachment. This binding mediates a conformational change in the virus capsid that facilitates efficient infection. The virion enters the host cell via endocytosis. During virus trafficking, L1 protein dissociates from the viral DNA and the genomic DNA is released to the host nucleus. The virion assembly takes place within the cell nucleus. Encapsulates the genomic DNA together with protein L2.</text>
</comment>
<comment type="subunit">
    <text evidence="1">Self-assembles into homopentamers. The capsid has an icosahedral symmetry and consists of 72 capsomers, with each capsomer being a pentamer of L1. Interacts with the minor capsid protein L2; this interaction is necessary for viral genome encapsidation. Interacts with protein E2; this interaction enhances E2-dependent replication and transcription activation.</text>
</comment>
<comment type="subcellular location">
    <subcellularLocation>
        <location evidence="1">Virion</location>
    </subcellularLocation>
    <subcellularLocation>
        <location evidence="1">Host nucleus</location>
    </subcellularLocation>
</comment>
<comment type="similarity">
    <text evidence="1">Belongs to the papillomaviridae L1 protein family.</text>
</comment>
<accession>P22162</accession>